<feature type="signal peptide" evidence="1">
    <location>
        <begin position="1"/>
        <end position="18"/>
    </location>
</feature>
<feature type="chain" id="PRO_1000050089" description="Flagellar L-ring protein">
    <location>
        <begin position="19"/>
        <end position="244"/>
    </location>
</feature>
<feature type="lipid moiety-binding region" description="N-palmitoyl cysteine" evidence="1">
    <location>
        <position position="19"/>
    </location>
</feature>
<feature type="lipid moiety-binding region" description="S-diacylglycerol cysteine" evidence="1">
    <location>
        <position position="19"/>
    </location>
</feature>
<comment type="function">
    <text evidence="1">Assembles around the rod to form the L-ring and probably protects the motor/basal body from shearing forces during rotation.</text>
</comment>
<comment type="subunit">
    <text evidence="1">The basal body constitutes a major portion of the flagellar organelle and consists of four rings (L,P,S, and M) mounted on a central rod.</text>
</comment>
<comment type="subcellular location">
    <subcellularLocation>
        <location evidence="1">Cell outer membrane</location>
        <topology evidence="1">Lipid-anchor</topology>
    </subcellularLocation>
    <subcellularLocation>
        <location evidence="1">Bacterial flagellum basal body</location>
    </subcellularLocation>
</comment>
<comment type="similarity">
    <text evidence="1">Belongs to the FlgH family.</text>
</comment>
<reference key="1">
    <citation type="submission" date="2006-02" db="EMBL/GenBank/DDBJ databases">
        <title>Complete sequence of chromosome of Jannaschia sp. CCS1.</title>
        <authorList>
            <consortium name="US DOE Joint Genome Institute"/>
            <person name="Copeland A."/>
            <person name="Lucas S."/>
            <person name="Lapidus A."/>
            <person name="Barry K."/>
            <person name="Detter J.C."/>
            <person name="Glavina del Rio T."/>
            <person name="Hammon N."/>
            <person name="Israni S."/>
            <person name="Pitluck S."/>
            <person name="Brettin T."/>
            <person name="Bruce D."/>
            <person name="Han C."/>
            <person name="Tapia R."/>
            <person name="Gilna P."/>
            <person name="Chertkov O."/>
            <person name="Saunders E."/>
            <person name="Schmutz J."/>
            <person name="Larimer F."/>
            <person name="Land M."/>
            <person name="Kyrpides N."/>
            <person name="Lykidis A."/>
            <person name="Moran M.A."/>
            <person name="Belas R."/>
            <person name="Ye W."/>
            <person name="Buchan A."/>
            <person name="Gonzalez J.M."/>
            <person name="Schell M.A."/>
            <person name="Richardson P."/>
        </authorList>
    </citation>
    <scope>NUCLEOTIDE SEQUENCE [LARGE SCALE GENOMIC DNA]</scope>
    <source>
        <strain>CCS1</strain>
    </source>
</reference>
<organism>
    <name type="scientific">Jannaschia sp. (strain CCS1)</name>
    <dbReference type="NCBI Taxonomy" id="290400"/>
    <lineage>
        <taxon>Bacteria</taxon>
        <taxon>Pseudomonadati</taxon>
        <taxon>Pseudomonadota</taxon>
        <taxon>Alphaproteobacteria</taxon>
        <taxon>Rhodobacterales</taxon>
        <taxon>Roseobacteraceae</taxon>
        <taxon>Jannaschia</taxon>
    </lineage>
</organism>
<name>FLGH_JANSC</name>
<keyword id="KW-0975">Bacterial flagellum</keyword>
<keyword id="KW-0998">Cell outer membrane</keyword>
<keyword id="KW-0449">Lipoprotein</keyword>
<keyword id="KW-0472">Membrane</keyword>
<keyword id="KW-0564">Palmitate</keyword>
<keyword id="KW-1185">Reference proteome</keyword>
<keyword id="KW-0732">Signal</keyword>
<sequence>MNMRVFIFLIFAAASVSACGRLASVGQTPNLTSPADGNEVFAMNVVPIPDARDVPSRTEGASLWTSGRASLLGDRRASLRGDILTVVIEIDDSAEFSNSSERERSGSEQMGISNLFGLPQRVDGLLTQGGSLGEAVELDSASRSSGEGAIRRNEQLTLRVAATITEVLQNGVLRIEGSQEVRVNNEVRELLVTGYVRPEDISRQNAIEYDRIAAARISYGGRGLITDAQRPRYGQEIADTVLPF</sequence>
<evidence type="ECO:0000255" key="1">
    <source>
        <dbReference type="HAMAP-Rule" id="MF_00415"/>
    </source>
</evidence>
<dbReference type="EMBL" id="CP000264">
    <property type="protein sequence ID" value="ABD57108.1"/>
    <property type="molecule type" value="Genomic_DNA"/>
</dbReference>
<dbReference type="SMR" id="Q28JK4"/>
<dbReference type="STRING" id="290400.Jann_4191"/>
<dbReference type="KEGG" id="jan:Jann_4191"/>
<dbReference type="eggNOG" id="COG2063">
    <property type="taxonomic scope" value="Bacteria"/>
</dbReference>
<dbReference type="HOGENOM" id="CLU_069313_1_2_5"/>
<dbReference type="OrthoDB" id="9789227at2"/>
<dbReference type="Proteomes" id="UP000008326">
    <property type="component" value="Chromosome"/>
</dbReference>
<dbReference type="GO" id="GO:0009427">
    <property type="term" value="C:bacterial-type flagellum basal body, distal rod, L ring"/>
    <property type="evidence" value="ECO:0007669"/>
    <property type="project" value="InterPro"/>
</dbReference>
<dbReference type="GO" id="GO:0009279">
    <property type="term" value="C:cell outer membrane"/>
    <property type="evidence" value="ECO:0007669"/>
    <property type="project" value="UniProtKB-SubCell"/>
</dbReference>
<dbReference type="GO" id="GO:0003774">
    <property type="term" value="F:cytoskeletal motor activity"/>
    <property type="evidence" value="ECO:0007669"/>
    <property type="project" value="InterPro"/>
</dbReference>
<dbReference type="GO" id="GO:0071973">
    <property type="term" value="P:bacterial-type flagellum-dependent cell motility"/>
    <property type="evidence" value="ECO:0007669"/>
    <property type="project" value="InterPro"/>
</dbReference>
<dbReference type="HAMAP" id="MF_00415">
    <property type="entry name" value="FlgH"/>
    <property type="match status" value="1"/>
</dbReference>
<dbReference type="InterPro" id="IPR000527">
    <property type="entry name" value="Flag_Lring"/>
</dbReference>
<dbReference type="NCBIfam" id="NF001305">
    <property type="entry name" value="PRK00249.1-5"/>
    <property type="match status" value="1"/>
</dbReference>
<dbReference type="PANTHER" id="PTHR34933">
    <property type="entry name" value="FLAGELLAR L-RING PROTEIN"/>
    <property type="match status" value="1"/>
</dbReference>
<dbReference type="PANTHER" id="PTHR34933:SF1">
    <property type="entry name" value="FLAGELLAR L-RING PROTEIN"/>
    <property type="match status" value="1"/>
</dbReference>
<dbReference type="Pfam" id="PF02107">
    <property type="entry name" value="FlgH"/>
    <property type="match status" value="1"/>
</dbReference>
<dbReference type="PRINTS" id="PR01008">
    <property type="entry name" value="FLGLRINGFLGH"/>
</dbReference>
<dbReference type="PROSITE" id="PS51257">
    <property type="entry name" value="PROKAR_LIPOPROTEIN"/>
    <property type="match status" value="1"/>
</dbReference>
<protein>
    <recommendedName>
        <fullName evidence="1">Flagellar L-ring protein</fullName>
    </recommendedName>
    <alternativeName>
        <fullName evidence="1">Basal body L-ring protein</fullName>
    </alternativeName>
</protein>
<gene>
    <name evidence="1" type="primary">flgH</name>
    <name type="ordered locus">Jann_4191</name>
</gene>
<accession>Q28JK4</accession>
<proteinExistence type="inferred from homology"/>